<evidence type="ECO:0000255" key="1">
    <source>
        <dbReference type="HAMAP-Rule" id="MF_01152"/>
    </source>
</evidence>
<comment type="function">
    <text evidence="1">Participates actively in the response to hyperosmotic and heat shock by preventing the aggregation of stress-denatured proteins and by disaggregating proteins, also in an autonomous, DnaK-independent fashion. Unfolded proteins bind initially to DnaJ; upon interaction with the DnaJ-bound protein, DnaK hydrolyzes its bound ATP, resulting in the formation of a stable complex. GrpE releases ADP from DnaK; ATP binding to DnaK triggers the release of the substrate protein, thus completing the reaction cycle. Several rounds of ATP-dependent interactions between DnaJ, DnaK and GrpE are required for fully efficient folding. Also involved, together with DnaK and GrpE, in the DNA replication of plasmids through activation of initiation proteins.</text>
</comment>
<comment type="cofactor">
    <cofactor evidence="1">
        <name>Zn(2+)</name>
        <dbReference type="ChEBI" id="CHEBI:29105"/>
    </cofactor>
    <text evidence="1">Binds 2 Zn(2+) ions per monomer.</text>
</comment>
<comment type="subunit">
    <text evidence="1">Homodimer.</text>
</comment>
<comment type="subcellular location">
    <subcellularLocation>
        <location evidence="1">Cytoplasm</location>
    </subcellularLocation>
</comment>
<comment type="domain">
    <text evidence="1">The J domain is necessary and sufficient to stimulate DnaK ATPase activity. Zinc center 1 plays an important role in the autonomous, DnaK-independent chaperone activity of DnaJ. Zinc center 2 is essential for interaction with DnaK and for DnaJ activity.</text>
</comment>
<comment type="similarity">
    <text evidence="1">Belongs to the DnaJ family.</text>
</comment>
<organism>
    <name type="scientific">Xanthomonas axonopodis pv. citri (strain 306)</name>
    <dbReference type="NCBI Taxonomy" id="190486"/>
    <lineage>
        <taxon>Bacteria</taxon>
        <taxon>Pseudomonadati</taxon>
        <taxon>Pseudomonadota</taxon>
        <taxon>Gammaproteobacteria</taxon>
        <taxon>Lysobacterales</taxon>
        <taxon>Lysobacteraceae</taxon>
        <taxon>Xanthomonas</taxon>
    </lineage>
</organism>
<accession>Q8PMA9</accession>
<reference key="1">
    <citation type="journal article" date="2002" name="Nature">
        <title>Comparison of the genomes of two Xanthomonas pathogens with differing host specificities.</title>
        <authorList>
            <person name="da Silva A.C.R."/>
            <person name="Ferro J.A."/>
            <person name="Reinach F.C."/>
            <person name="Farah C.S."/>
            <person name="Furlan L.R."/>
            <person name="Quaggio R.B."/>
            <person name="Monteiro-Vitorello C.B."/>
            <person name="Van Sluys M.A."/>
            <person name="Almeida N.F. Jr."/>
            <person name="Alves L.M.C."/>
            <person name="do Amaral A.M."/>
            <person name="Bertolini M.C."/>
            <person name="Camargo L.E.A."/>
            <person name="Camarotte G."/>
            <person name="Cannavan F."/>
            <person name="Cardozo J."/>
            <person name="Chambergo F."/>
            <person name="Ciapina L.P."/>
            <person name="Cicarelli R.M.B."/>
            <person name="Coutinho L.L."/>
            <person name="Cursino-Santos J.R."/>
            <person name="El-Dorry H."/>
            <person name="Faria J.B."/>
            <person name="Ferreira A.J.S."/>
            <person name="Ferreira R.C.C."/>
            <person name="Ferro M.I.T."/>
            <person name="Formighieri E.F."/>
            <person name="Franco M.C."/>
            <person name="Greggio C.C."/>
            <person name="Gruber A."/>
            <person name="Katsuyama A.M."/>
            <person name="Kishi L.T."/>
            <person name="Leite R.P."/>
            <person name="Lemos E.G.M."/>
            <person name="Lemos M.V.F."/>
            <person name="Locali E.C."/>
            <person name="Machado M.A."/>
            <person name="Madeira A.M.B.N."/>
            <person name="Martinez-Rossi N.M."/>
            <person name="Martins E.C."/>
            <person name="Meidanis J."/>
            <person name="Menck C.F.M."/>
            <person name="Miyaki C.Y."/>
            <person name="Moon D.H."/>
            <person name="Moreira L.M."/>
            <person name="Novo M.T.M."/>
            <person name="Okura V.K."/>
            <person name="Oliveira M.C."/>
            <person name="Oliveira V.R."/>
            <person name="Pereira H.A."/>
            <person name="Rossi A."/>
            <person name="Sena J.A.D."/>
            <person name="Silva C."/>
            <person name="de Souza R.F."/>
            <person name="Spinola L.A.F."/>
            <person name="Takita M.A."/>
            <person name="Tamura R.E."/>
            <person name="Teixeira E.C."/>
            <person name="Tezza R.I.D."/>
            <person name="Trindade dos Santos M."/>
            <person name="Truffi D."/>
            <person name="Tsai S.M."/>
            <person name="White F.F."/>
            <person name="Setubal J.C."/>
            <person name="Kitajima J.P."/>
        </authorList>
    </citation>
    <scope>NUCLEOTIDE SEQUENCE [LARGE SCALE GENOMIC DNA]</scope>
    <source>
        <strain>306</strain>
    </source>
</reference>
<sequence length="375" mass="40317">MSKRDYYEVLGVARGASDEELKKAYRRCAMKHHPDRNPGDAAAEAAFKECKEAYEVLSDGNKRRAYDAHGHAAFEHGMGGGGGPGGPDMGDIFGDIFGNIFGGGAAGPRAARRGADVGYVLELDLEEAVAGIERRIEIPTLIECAPCHGSGSEDGKVETCGTCHGRGQVRIQRGIFAMQQSCPHCDGRGTLIQNPCKTCHGAGRVEEDKVLSIKVPAGVDTGDRIRLAGEGEAGPAGTPPGDLYVEVRVREHAIFQRDGDDLHCEVPIRISQAALGDTVRVATLGGEAEIRIPAETQTGKLFRLRGKGVRSVRSRSEGDLYCRVVVETPVNLTADQRELLQQFEATFTGEDARKHSPKSATFIDGVKGFWDRMTS</sequence>
<feature type="chain" id="PRO_0000070937" description="Chaperone protein DnaJ">
    <location>
        <begin position="1"/>
        <end position="375"/>
    </location>
</feature>
<feature type="domain" description="J" evidence="1">
    <location>
        <begin position="5"/>
        <end position="70"/>
    </location>
</feature>
<feature type="repeat" description="CXXCXGXG motif">
    <location>
        <begin position="144"/>
        <end position="151"/>
    </location>
</feature>
<feature type="repeat" description="CXXCXGXG motif">
    <location>
        <begin position="160"/>
        <end position="167"/>
    </location>
</feature>
<feature type="repeat" description="CXXCXGXG motif">
    <location>
        <begin position="182"/>
        <end position="189"/>
    </location>
</feature>
<feature type="repeat" description="CXXCXGXG motif">
    <location>
        <begin position="196"/>
        <end position="203"/>
    </location>
</feature>
<feature type="zinc finger region" description="CR-type" evidence="1">
    <location>
        <begin position="131"/>
        <end position="208"/>
    </location>
</feature>
<feature type="binding site" evidence="1">
    <location>
        <position position="144"/>
    </location>
    <ligand>
        <name>Zn(2+)</name>
        <dbReference type="ChEBI" id="CHEBI:29105"/>
        <label>1</label>
    </ligand>
</feature>
<feature type="binding site" evidence="1">
    <location>
        <position position="147"/>
    </location>
    <ligand>
        <name>Zn(2+)</name>
        <dbReference type="ChEBI" id="CHEBI:29105"/>
        <label>1</label>
    </ligand>
</feature>
<feature type="binding site" evidence="1">
    <location>
        <position position="160"/>
    </location>
    <ligand>
        <name>Zn(2+)</name>
        <dbReference type="ChEBI" id="CHEBI:29105"/>
        <label>2</label>
    </ligand>
</feature>
<feature type="binding site" evidence="1">
    <location>
        <position position="163"/>
    </location>
    <ligand>
        <name>Zn(2+)</name>
        <dbReference type="ChEBI" id="CHEBI:29105"/>
        <label>2</label>
    </ligand>
</feature>
<feature type="binding site" evidence="1">
    <location>
        <position position="182"/>
    </location>
    <ligand>
        <name>Zn(2+)</name>
        <dbReference type="ChEBI" id="CHEBI:29105"/>
        <label>2</label>
    </ligand>
</feature>
<feature type="binding site" evidence="1">
    <location>
        <position position="185"/>
    </location>
    <ligand>
        <name>Zn(2+)</name>
        <dbReference type="ChEBI" id="CHEBI:29105"/>
        <label>2</label>
    </ligand>
</feature>
<feature type="binding site" evidence="1">
    <location>
        <position position="196"/>
    </location>
    <ligand>
        <name>Zn(2+)</name>
        <dbReference type="ChEBI" id="CHEBI:29105"/>
        <label>1</label>
    </ligand>
</feature>
<feature type="binding site" evidence="1">
    <location>
        <position position="199"/>
    </location>
    <ligand>
        <name>Zn(2+)</name>
        <dbReference type="ChEBI" id="CHEBI:29105"/>
        <label>1</label>
    </ligand>
</feature>
<proteinExistence type="inferred from homology"/>
<gene>
    <name evidence="1" type="primary">dnaJ</name>
    <name type="ordered locus">XAC1523</name>
</gene>
<protein>
    <recommendedName>
        <fullName evidence="1">Chaperone protein DnaJ</fullName>
    </recommendedName>
</protein>
<keyword id="KW-0143">Chaperone</keyword>
<keyword id="KW-0963">Cytoplasm</keyword>
<keyword id="KW-0235">DNA replication</keyword>
<keyword id="KW-0479">Metal-binding</keyword>
<keyword id="KW-0677">Repeat</keyword>
<keyword id="KW-0346">Stress response</keyword>
<keyword id="KW-0862">Zinc</keyword>
<keyword id="KW-0863">Zinc-finger</keyword>
<dbReference type="EMBL" id="AE008923">
    <property type="protein sequence ID" value="AAM36392.1"/>
    <property type="molecule type" value="Genomic_DNA"/>
</dbReference>
<dbReference type="RefSeq" id="WP_003483637.1">
    <property type="nucleotide sequence ID" value="NC_003919.1"/>
</dbReference>
<dbReference type="SMR" id="Q8PMA9"/>
<dbReference type="GeneID" id="66910681"/>
<dbReference type="KEGG" id="xac:XAC1523"/>
<dbReference type="eggNOG" id="COG0484">
    <property type="taxonomic scope" value="Bacteria"/>
</dbReference>
<dbReference type="HOGENOM" id="CLU_017633_0_7_6"/>
<dbReference type="Proteomes" id="UP000000576">
    <property type="component" value="Chromosome"/>
</dbReference>
<dbReference type="GO" id="GO:0005737">
    <property type="term" value="C:cytoplasm"/>
    <property type="evidence" value="ECO:0007669"/>
    <property type="project" value="UniProtKB-SubCell"/>
</dbReference>
<dbReference type="GO" id="GO:0005524">
    <property type="term" value="F:ATP binding"/>
    <property type="evidence" value="ECO:0007669"/>
    <property type="project" value="InterPro"/>
</dbReference>
<dbReference type="GO" id="GO:0031072">
    <property type="term" value="F:heat shock protein binding"/>
    <property type="evidence" value="ECO:0007669"/>
    <property type="project" value="InterPro"/>
</dbReference>
<dbReference type="GO" id="GO:0051082">
    <property type="term" value="F:unfolded protein binding"/>
    <property type="evidence" value="ECO:0007669"/>
    <property type="project" value="UniProtKB-UniRule"/>
</dbReference>
<dbReference type="GO" id="GO:0008270">
    <property type="term" value="F:zinc ion binding"/>
    <property type="evidence" value="ECO:0007669"/>
    <property type="project" value="UniProtKB-UniRule"/>
</dbReference>
<dbReference type="GO" id="GO:0051085">
    <property type="term" value="P:chaperone cofactor-dependent protein refolding"/>
    <property type="evidence" value="ECO:0007669"/>
    <property type="project" value="TreeGrafter"/>
</dbReference>
<dbReference type="GO" id="GO:0006260">
    <property type="term" value="P:DNA replication"/>
    <property type="evidence" value="ECO:0007669"/>
    <property type="project" value="UniProtKB-KW"/>
</dbReference>
<dbReference type="GO" id="GO:0042026">
    <property type="term" value="P:protein refolding"/>
    <property type="evidence" value="ECO:0007669"/>
    <property type="project" value="TreeGrafter"/>
</dbReference>
<dbReference type="GO" id="GO:0009408">
    <property type="term" value="P:response to heat"/>
    <property type="evidence" value="ECO:0007669"/>
    <property type="project" value="InterPro"/>
</dbReference>
<dbReference type="CDD" id="cd06257">
    <property type="entry name" value="DnaJ"/>
    <property type="match status" value="1"/>
</dbReference>
<dbReference type="CDD" id="cd10747">
    <property type="entry name" value="DnaJ_C"/>
    <property type="match status" value="1"/>
</dbReference>
<dbReference type="CDD" id="cd10719">
    <property type="entry name" value="DnaJ_zf"/>
    <property type="match status" value="1"/>
</dbReference>
<dbReference type="FunFam" id="2.10.230.10:FF:000002">
    <property type="entry name" value="Molecular chaperone DnaJ"/>
    <property type="match status" value="1"/>
</dbReference>
<dbReference type="FunFam" id="2.60.260.20:FF:000004">
    <property type="entry name" value="Molecular chaperone DnaJ"/>
    <property type="match status" value="1"/>
</dbReference>
<dbReference type="Gene3D" id="1.10.287.110">
    <property type="entry name" value="DnaJ domain"/>
    <property type="match status" value="1"/>
</dbReference>
<dbReference type="Gene3D" id="2.10.230.10">
    <property type="entry name" value="Heat shock protein DnaJ, cysteine-rich domain"/>
    <property type="match status" value="1"/>
</dbReference>
<dbReference type="Gene3D" id="2.60.260.20">
    <property type="entry name" value="Urease metallochaperone UreE, N-terminal domain"/>
    <property type="match status" value="2"/>
</dbReference>
<dbReference type="HAMAP" id="MF_01152">
    <property type="entry name" value="DnaJ"/>
    <property type="match status" value="1"/>
</dbReference>
<dbReference type="InterPro" id="IPR012724">
    <property type="entry name" value="DnaJ"/>
</dbReference>
<dbReference type="InterPro" id="IPR002939">
    <property type="entry name" value="DnaJ_C"/>
</dbReference>
<dbReference type="InterPro" id="IPR001623">
    <property type="entry name" value="DnaJ_domain"/>
</dbReference>
<dbReference type="InterPro" id="IPR008971">
    <property type="entry name" value="HSP40/DnaJ_pept-bd"/>
</dbReference>
<dbReference type="InterPro" id="IPR001305">
    <property type="entry name" value="HSP_DnaJ_Cys-rich_dom"/>
</dbReference>
<dbReference type="InterPro" id="IPR036410">
    <property type="entry name" value="HSP_DnaJ_Cys-rich_dom_sf"/>
</dbReference>
<dbReference type="InterPro" id="IPR036869">
    <property type="entry name" value="J_dom_sf"/>
</dbReference>
<dbReference type="NCBIfam" id="TIGR02349">
    <property type="entry name" value="DnaJ_bact"/>
    <property type="match status" value="1"/>
</dbReference>
<dbReference type="NCBIfam" id="NF008035">
    <property type="entry name" value="PRK10767.1"/>
    <property type="match status" value="1"/>
</dbReference>
<dbReference type="PANTHER" id="PTHR43096:SF48">
    <property type="entry name" value="CHAPERONE PROTEIN DNAJ"/>
    <property type="match status" value="1"/>
</dbReference>
<dbReference type="PANTHER" id="PTHR43096">
    <property type="entry name" value="DNAJ HOMOLOG 1, MITOCHONDRIAL-RELATED"/>
    <property type="match status" value="1"/>
</dbReference>
<dbReference type="Pfam" id="PF00226">
    <property type="entry name" value="DnaJ"/>
    <property type="match status" value="1"/>
</dbReference>
<dbReference type="Pfam" id="PF01556">
    <property type="entry name" value="DnaJ_C"/>
    <property type="match status" value="1"/>
</dbReference>
<dbReference type="Pfam" id="PF00684">
    <property type="entry name" value="DnaJ_CXXCXGXG"/>
    <property type="match status" value="1"/>
</dbReference>
<dbReference type="PRINTS" id="PR00625">
    <property type="entry name" value="JDOMAIN"/>
</dbReference>
<dbReference type="SMART" id="SM00271">
    <property type="entry name" value="DnaJ"/>
    <property type="match status" value="1"/>
</dbReference>
<dbReference type="SUPFAM" id="SSF46565">
    <property type="entry name" value="Chaperone J-domain"/>
    <property type="match status" value="1"/>
</dbReference>
<dbReference type="SUPFAM" id="SSF57938">
    <property type="entry name" value="DnaJ/Hsp40 cysteine-rich domain"/>
    <property type="match status" value="1"/>
</dbReference>
<dbReference type="SUPFAM" id="SSF49493">
    <property type="entry name" value="HSP40/DnaJ peptide-binding domain"/>
    <property type="match status" value="2"/>
</dbReference>
<dbReference type="PROSITE" id="PS50076">
    <property type="entry name" value="DNAJ_2"/>
    <property type="match status" value="1"/>
</dbReference>
<dbReference type="PROSITE" id="PS51188">
    <property type="entry name" value="ZF_CR"/>
    <property type="match status" value="1"/>
</dbReference>
<name>DNAJ_XANAC</name>